<evidence type="ECO:0000250" key="1">
    <source>
        <dbReference type="UniProtKB" id="Q3KNA1"/>
    </source>
</evidence>
<evidence type="ECO:0000255" key="2"/>
<evidence type="ECO:0000255" key="3">
    <source>
        <dbReference type="PROSITE-ProRule" id="PRU00521"/>
    </source>
</evidence>
<sequence>MDPTTLVWGTESTTMNGNDQALPLLCGKETLILVVLILFIALVGLVGNAFVLWLLGFRMRRNAFSVYVLSLAGADFLFLCFPMINCLAYLINFFHSISINFPSFFTTVMTCAYLAGLSMLSAISTERCLSVLWPIWYRSRRPRHLSAVMCVLLWALSLLLSILEGKFCGFLFSDGDSGWCQTFDFITAAWLMFLFVVLCGSSLALLVRILCGSRGLPLTRLYLTILLTVLIFLLCGLPFGIQWFLILWIWKNSDVLFCHIHPVSVVLSSFNSSANPIIYFFVGSFRKQWRLRQPVLKLALQRALQDTAEVDHSEGCFSQGTLEMSGSSLV</sequence>
<comment type="function">
    <text evidence="1">Mast cell-specific receptor for basic secretagogues, i.e. cationic amphiphilic drugs, as well as endo- or exogenous peptides, consisting of a basic head group and a hydrophobic core. Recognizes and binds small molecules containing a cyclized tetrahydroisoquinoline (THIQ), such as non-steroidal neuromuscular blocking drugs (NMBDs), including tubocurarine and atracurium. In response to these compounds, mediates pseudo-allergic reactions characterized by histamine release, inflammation and airway contraction.</text>
</comment>
<comment type="subcellular location">
    <subcellularLocation>
        <location evidence="2">Cell membrane</location>
        <topology evidence="2">Multi-pass membrane protein</topology>
    </subcellularLocation>
</comment>
<comment type="similarity">
    <text evidence="3">Belongs to the G-protein coupled receptor 1 family. Mas subfamily.</text>
</comment>
<keyword id="KW-1003">Cell membrane</keyword>
<keyword id="KW-0297">G-protein coupled receptor</keyword>
<keyword id="KW-0472">Membrane</keyword>
<keyword id="KW-0675">Receptor</keyword>
<keyword id="KW-0807">Transducer</keyword>
<keyword id="KW-0812">Transmembrane</keyword>
<keyword id="KW-1133">Transmembrane helix</keyword>
<name>MRGX2_TRAFR</name>
<dbReference type="EMBL" id="AY651164">
    <property type="protein sequence ID" value="AAW70077.1"/>
    <property type="molecule type" value="Genomic_DNA"/>
</dbReference>
<dbReference type="RefSeq" id="XP_033062001.1">
    <property type="nucleotide sequence ID" value="XM_033206110.1"/>
</dbReference>
<dbReference type="SMR" id="Q4QXU4"/>
<dbReference type="GeneID" id="117080810"/>
<dbReference type="GO" id="GO:0005886">
    <property type="term" value="C:plasma membrane"/>
    <property type="evidence" value="ECO:0007669"/>
    <property type="project" value="UniProtKB-SubCell"/>
</dbReference>
<dbReference type="GO" id="GO:0004930">
    <property type="term" value="F:G protein-coupled receptor activity"/>
    <property type="evidence" value="ECO:0000250"/>
    <property type="project" value="UniProtKB"/>
</dbReference>
<dbReference type="GO" id="GO:1990595">
    <property type="term" value="F:mast cell secretagogue receptor activity"/>
    <property type="evidence" value="ECO:0000250"/>
    <property type="project" value="UniProtKB"/>
</dbReference>
<dbReference type="GO" id="GO:0045576">
    <property type="term" value="P:mast cell activation"/>
    <property type="evidence" value="ECO:0000250"/>
    <property type="project" value="UniProtKB"/>
</dbReference>
<dbReference type="GO" id="GO:0043303">
    <property type="term" value="P:mast cell degranulation"/>
    <property type="evidence" value="ECO:0000250"/>
    <property type="project" value="UniProtKB"/>
</dbReference>
<dbReference type="CDD" id="cd15106">
    <property type="entry name" value="7tmA_MrgprX-like"/>
    <property type="match status" value="1"/>
</dbReference>
<dbReference type="FunFam" id="1.20.1070.10:FF:000140">
    <property type="entry name" value="Mas-related G-protein coupled receptor member X2"/>
    <property type="match status" value="1"/>
</dbReference>
<dbReference type="Gene3D" id="1.20.1070.10">
    <property type="entry name" value="Rhodopsin 7-helix transmembrane proteins"/>
    <property type="match status" value="1"/>
</dbReference>
<dbReference type="InterPro" id="IPR000276">
    <property type="entry name" value="GPCR_Rhodpsn"/>
</dbReference>
<dbReference type="InterPro" id="IPR017452">
    <property type="entry name" value="GPCR_Rhodpsn_7TM"/>
</dbReference>
<dbReference type="InterPro" id="IPR026234">
    <property type="entry name" value="MRGPCRFAMILY"/>
</dbReference>
<dbReference type="PANTHER" id="PTHR11334">
    <property type="entry name" value="MAS-RELATED G-PROTEIN COUPLED RECEPTOR"/>
    <property type="match status" value="1"/>
</dbReference>
<dbReference type="PANTHER" id="PTHR11334:SF29">
    <property type="entry name" value="MAS-RELATED G-PROTEIN COUPLED RECEPTOR MEMBER X2"/>
    <property type="match status" value="1"/>
</dbReference>
<dbReference type="Pfam" id="PF00001">
    <property type="entry name" value="7tm_1"/>
    <property type="match status" value="1"/>
</dbReference>
<dbReference type="PRINTS" id="PR00237">
    <property type="entry name" value="GPCRRHODOPSN"/>
</dbReference>
<dbReference type="PRINTS" id="PR02108">
    <property type="entry name" value="MRGPCRFAMILY"/>
</dbReference>
<dbReference type="SUPFAM" id="SSF81321">
    <property type="entry name" value="Family A G protein-coupled receptor-like"/>
    <property type="match status" value="1"/>
</dbReference>
<dbReference type="PROSITE" id="PS00237">
    <property type="entry name" value="G_PROTEIN_RECEP_F1_1"/>
    <property type="match status" value="1"/>
</dbReference>
<dbReference type="PROSITE" id="PS50262">
    <property type="entry name" value="G_PROTEIN_RECEP_F1_2"/>
    <property type="match status" value="1"/>
</dbReference>
<organism>
    <name type="scientific">Trachypithecus francoisi</name>
    <name type="common">Francois' leaf monkey</name>
    <name type="synonym">Presbytis francoisi</name>
    <dbReference type="NCBI Taxonomy" id="54180"/>
    <lineage>
        <taxon>Eukaryota</taxon>
        <taxon>Metazoa</taxon>
        <taxon>Chordata</taxon>
        <taxon>Craniata</taxon>
        <taxon>Vertebrata</taxon>
        <taxon>Euteleostomi</taxon>
        <taxon>Mammalia</taxon>
        <taxon>Eutheria</taxon>
        <taxon>Euarchontoglires</taxon>
        <taxon>Primates</taxon>
        <taxon>Haplorrhini</taxon>
        <taxon>Catarrhini</taxon>
        <taxon>Cercopithecidae</taxon>
        <taxon>Colobinae</taxon>
        <taxon>Trachypithecus</taxon>
    </lineage>
</organism>
<protein>
    <recommendedName>
        <fullName>Mas-related G-protein coupled receptor member X2</fullName>
    </recommendedName>
</protein>
<gene>
    <name type="primary">MRGPRX2</name>
    <name type="synonym">MRGX2</name>
</gene>
<feature type="chain" id="PRO_0000069781" description="Mas-related G-protein coupled receptor member X2">
    <location>
        <begin position="1"/>
        <end position="330"/>
    </location>
</feature>
<feature type="topological domain" description="Extracellular" evidence="2">
    <location>
        <begin position="1"/>
        <end position="33"/>
    </location>
</feature>
<feature type="transmembrane region" description="Helical; Name=1" evidence="2">
    <location>
        <begin position="34"/>
        <end position="54"/>
    </location>
</feature>
<feature type="topological domain" description="Cytoplasmic" evidence="2">
    <location>
        <begin position="55"/>
        <end position="63"/>
    </location>
</feature>
<feature type="transmembrane region" description="Helical; Name=2" evidence="2">
    <location>
        <begin position="64"/>
        <end position="84"/>
    </location>
</feature>
<feature type="topological domain" description="Extracellular" evidence="2">
    <location>
        <begin position="85"/>
        <end position="96"/>
    </location>
</feature>
<feature type="transmembrane region" description="Helical; Name=3" evidence="2">
    <location>
        <begin position="97"/>
        <end position="117"/>
    </location>
</feature>
<feature type="topological domain" description="Cytoplasmic" evidence="2">
    <location>
        <begin position="118"/>
        <end position="144"/>
    </location>
</feature>
<feature type="transmembrane region" description="Helical; Name=4" evidence="2">
    <location>
        <begin position="145"/>
        <end position="165"/>
    </location>
</feature>
<feature type="topological domain" description="Extracellular" evidence="2">
    <location>
        <begin position="166"/>
        <end position="184"/>
    </location>
</feature>
<feature type="transmembrane region" description="Helical; Name=5" evidence="2">
    <location>
        <begin position="185"/>
        <end position="205"/>
    </location>
</feature>
<feature type="topological domain" description="Cytoplasmic" evidence="2">
    <location>
        <begin position="206"/>
        <end position="228"/>
    </location>
</feature>
<feature type="transmembrane region" description="Helical; Name=6" evidence="2">
    <location>
        <begin position="229"/>
        <end position="249"/>
    </location>
</feature>
<feature type="topological domain" description="Extracellular" evidence="2">
    <location>
        <begin position="250"/>
        <end position="264"/>
    </location>
</feature>
<feature type="transmembrane region" description="Helical; Name=7" evidence="2">
    <location>
        <begin position="265"/>
        <end position="285"/>
    </location>
</feature>
<feature type="topological domain" description="Cytoplasmic" evidence="2">
    <location>
        <begin position="286"/>
        <end position="330"/>
    </location>
</feature>
<accession>Q4QXU4</accession>
<proteinExistence type="inferred from homology"/>
<reference key="1">
    <citation type="journal article" date="2005" name="Gene">
        <title>Adaptive evolution of MRGX2, a human sensory neuron specific gene involved in nociception.</title>
        <authorList>
            <person name="Yang S."/>
            <person name="Liu Y."/>
            <person name="Lin A.A."/>
            <person name="Cavalli-Sforza L.L."/>
            <person name="Zhao Z."/>
            <person name="Su B."/>
        </authorList>
    </citation>
    <scope>NUCLEOTIDE SEQUENCE [GENOMIC DNA]</scope>
</reference>